<name>CLPS_WOLSU</name>
<evidence type="ECO:0000255" key="1">
    <source>
        <dbReference type="HAMAP-Rule" id="MF_00302"/>
    </source>
</evidence>
<dbReference type="EMBL" id="BX571657">
    <property type="protein sequence ID" value="CAE09486.1"/>
    <property type="molecule type" value="Genomic_DNA"/>
</dbReference>
<dbReference type="RefSeq" id="WP_011138286.1">
    <property type="nucleotide sequence ID" value="NC_005090.1"/>
</dbReference>
<dbReference type="SMR" id="Q7MSL3"/>
<dbReference type="STRING" id="273121.WS0336"/>
<dbReference type="KEGG" id="wsu:WS0336"/>
<dbReference type="eggNOG" id="COG2127">
    <property type="taxonomic scope" value="Bacteria"/>
</dbReference>
<dbReference type="HOGENOM" id="CLU_134358_1_0_7"/>
<dbReference type="Proteomes" id="UP000000422">
    <property type="component" value="Chromosome"/>
</dbReference>
<dbReference type="GO" id="GO:0030163">
    <property type="term" value="P:protein catabolic process"/>
    <property type="evidence" value="ECO:0007669"/>
    <property type="project" value="InterPro"/>
</dbReference>
<dbReference type="GO" id="GO:0006508">
    <property type="term" value="P:proteolysis"/>
    <property type="evidence" value="ECO:0007669"/>
    <property type="project" value="UniProtKB-UniRule"/>
</dbReference>
<dbReference type="FunFam" id="3.30.1390.10:FF:000002">
    <property type="entry name" value="ATP-dependent Clp protease adapter protein ClpS"/>
    <property type="match status" value="1"/>
</dbReference>
<dbReference type="Gene3D" id="3.30.1390.10">
    <property type="match status" value="1"/>
</dbReference>
<dbReference type="HAMAP" id="MF_00302">
    <property type="entry name" value="ClpS"/>
    <property type="match status" value="1"/>
</dbReference>
<dbReference type="InterPro" id="IPR022935">
    <property type="entry name" value="ClpS"/>
</dbReference>
<dbReference type="InterPro" id="IPR003769">
    <property type="entry name" value="ClpS_core"/>
</dbReference>
<dbReference type="InterPro" id="IPR014719">
    <property type="entry name" value="Ribosomal_bL12_C/ClpS-like"/>
</dbReference>
<dbReference type="PANTHER" id="PTHR33473:SF19">
    <property type="entry name" value="ATP-DEPENDENT CLP PROTEASE ADAPTER PROTEIN CLPS"/>
    <property type="match status" value="1"/>
</dbReference>
<dbReference type="PANTHER" id="PTHR33473">
    <property type="entry name" value="ATP-DEPENDENT CLP PROTEASE ADAPTER PROTEIN CLPS1, CHLOROPLASTIC"/>
    <property type="match status" value="1"/>
</dbReference>
<dbReference type="Pfam" id="PF02617">
    <property type="entry name" value="ClpS"/>
    <property type="match status" value="1"/>
</dbReference>
<dbReference type="SUPFAM" id="SSF54736">
    <property type="entry name" value="ClpS-like"/>
    <property type="match status" value="1"/>
</dbReference>
<proteinExistence type="inferred from homology"/>
<gene>
    <name evidence="1" type="primary">clpS</name>
    <name type="ordered locus">WS0336</name>
</gene>
<keyword id="KW-1185">Reference proteome</keyword>
<sequence>MVAKGSDFETEIKEEIIVAEPRRFKVILLNDDYSTMDFVVEVLMVIFNKNFDEALGVMLKVHNEGRGVCGIYPYDVAETKVSQVKKKAEESGFPLRAILEEC</sequence>
<reference key="1">
    <citation type="journal article" date="2003" name="Proc. Natl. Acad. Sci. U.S.A.">
        <title>Complete genome sequence and analysis of Wolinella succinogenes.</title>
        <authorList>
            <person name="Baar C."/>
            <person name="Eppinger M."/>
            <person name="Raddatz G."/>
            <person name="Simon J."/>
            <person name="Lanz C."/>
            <person name="Klimmek O."/>
            <person name="Nandakumar R."/>
            <person name="Gross R."/>
            <person name="Rosinus A."/>
            <person name="Keller H."/>
            <person name="Jagtap P."/>
            <person name="Linke B."/>
            <person name="Meyer F."/>
            <person name="Lederer H."/>
            <person name="Schuster S.C."/>
        </authorList>
    </citation>
    <scope>NUCLEOTIDE SEQUENCE [LARGE SCALE GENOMIC DNA]</scope>
    <source>
        <strain>ATCC 29543 / DSM 1740 / CCUG 13145 / JCM 31913 / LMG 7466 / NCTC 11488 / FDC 602W</strain>
    </source>
</reference>
<comment type="function">
    <text evidence="1">Involved in the modulation of the specificity of the ClpAP-mediated ATP-dependent protein degradation.</text>
</comment>
<comment type="subunit">
    <text evidence="1">Binds to the N-terminal domain of the chaperone ClpA.</text>
</comment>
<comment type="similarity">
    <text evidence="1">Belongs to the ClpS family.</text>
</comment>
<accession>Q7MSL3</accession>
<organism>
    <name type="scientific">Wolinella succinogenes (strain ATCC 29543 / DSM 1740 / CCUG 13145 / JCM 31913 / LMG 7466 / NCTC 11488 / FDC 602W)</name>
    <name type="common">Vibrio succinogenes</name>
    <dbReference type="NCBI Taxonomy" id="273121"/>
    <lineage>
        <taxon>Bacteria</taxon>
        <taxon>Pseudomonadati</taxon>
        <taxon>Campylobacterota</taxon>
        <taxon>Epsilonproteobacteria</taxon>
        <taxon>Campylobacterales</taxon>
        <taxon>Helicobacteraceae</taxon>
        <taxon>Wolinella</taxon>
    </lineage>
</organism>
<protein>
    <recommendedName>
        <fullName evidence="1">ATP-dependent Clp protease adapter protein ClpS</fullName>
    </recommendedName>
</protein>
<feature type="chain" id="PRO_0000215761" description="ATP-dependent Clp protease adapter protein ClpS">
    <location>
        <begin position="1"/>
        <end position="102"/>
    </location>
</feature>